<evidence type="ECO:0000255" key="1">
    <source>
        <dbReference type="HAMAP-Rule" id="MF_01428"/>
    </source>
</evidence>
<keyword id="KW-0030">Aminoacyl-tRNA synthetase</keyword>
<keyword id="KW-0067">ATP-binding</keyword>
<keyword id="KW-0436">Ligase</keyword>
<keyword id="KW-0479">Metal-binding</keyword>
<keyword id="KW-0547">Nucleotide-binding</keyword>
<keyword id="KW-1185">Reference proteome</keyword>
<keyword id="KW-0862">Zinc</keyword>
<organism>
    <name type="scientific">Cupriavidus metallidurans (strain ATCC 43123 / DSM 2839 / NBRC 102507 / CH34)</name>
    <name type="common">Ralstonia metallidurans</name>
    <dbReference type="NCBI Taxonomy" id="266264"/>
    <lineage>
        <taxon>Bacteria</taxon>
        <taxon>Pseudomonadati</taxon>
        <taxon>Pseudomonadota</taxon>
        <taxon>Betaproteobacteria</taxon>
        <taxon>Burkholderiales</taxon>
        <taxon>Burkholderiaceae</taxon>
        <taxon>Cupriavidus</taxon>
    </lineage>
</organism>
<protein>
    <recommendedName>
        <fullName evidence="1">Glutamyl-Q tRNA(Asp) synthetase</fullName>
        <shortName evidence="1">Glu-Q-RSs</shortName>
        <ecNumber evidence="1">6.1.1.-</ecNumber>
    </recommendedName>
</protein>
<dbReference type="EC" id="6.1.1.-" evidence="1"/>
<dbReference type="EMBL" id="CP000352">
    <property type="protein sequence ID" value="ABF09458.1"/>
    <property type="molecule type" value="Genomic_DNA"/>
</dbReference>
<dbReference type="RefSeq" id="WP_011517161.1">
    <property type="nucleotide sequence ID" value="NC_007973.1"/>
</dbReference>
<dbReference type="SMR" id="Q1LK68"/>
<dbReference type="STRING" id="266264.Rmet_2581"/>
<dbReference type="KEGG" id="rme:Rmet_2581"/>
<dbReference type="eggNOG" id="COG0008">
    <property type="taxonomic scope" value="Bacteria"/>
</dbReference>
<dbReference type="HOGENOM" id="CLU_015768_0_1_4"/>
<dbReference type="Proteomes" id="UP000002429">
    <property type="component" value="Chromosome"/>
</dbReference>
<dbReference type="GO" id="GO:0005829">
    <property type="term" value="C:cytosol"/>
    <property type="evidence" value="ECO:0007669"/>
    <property type="project" value="TreeGrafter"/>
</dbReference>
<dbReference type="GO" id="GO:0005524">
    <property type="term" value="F:ATP binding"/>
    <property type="evidence" value="ECO:0007669"/>
    <property type="project" value="UniProtKB-KW"/>
</dbReference>
<dbReference type="GO" id="GO:0004818">
    <property type="term" value="F:glutamate-tRNA ligase activity"/>
    <property type="evidence" value="ECO:0007669"/>
    <property type="project" value="TreeGrafter"/>
</dbReference>
<dbReference type="GO" id="GO:0008270">
    <property type="term" value="F:zinc ion binding"/>
    <property type="evidence" value="ECO:0007669"/>
    <property type="project" value="UniProtKB-UniRule"/>
</dbReference>
<dbReference type="GO" id="GO:0006424">
    <property type="term" value="P:glutamyl-tRNA aminoacylation"/>
    <property type="evidence" value="ECO:0007669"/>
    <property type="project" value="InterPro"/>
</dbReference>
<dbReference type="GO" id="GO:0006400">
    <property type="term" value="P:tRNA modification"/>
    <property type="evidence" value="ECO:0007669"/>
    <property type="project" value="InterPro"/>
</dbReference>
<dbReference type="Gene3D" id="3.40.50.620">
    <property type="entry name" value="HUPs"/>
    <property type="match status" value="1"/>
</dbReference>
<dbReference type="HAMAP" id="MF_01428">
    <property type="entry name" value="Glu_Q_tRNA_synth"/>
    <property type="match status" value="1"/>
</dbReference>
<dbReference type="InterPro" id="IPR022380">
    <property type="entry name" value="Glu-Q_tRNA(Asp)_Synthase"/>
</dbReference>
<dbReference type="InterPro" id="IPR000924">
    <property type="entry name" value="Glu/Gln-tRNA-synth"/>
</dbReference>
<dbReference type="InterPro" id="IPR020058">
    <property type="entry name" value="Glu/Gln-tRNA-synth_Ib_cat-dom"/>
</dbReference>
<dbReference type="InterPro" id="IPR049940">
    <property type="entry name" value="GluQ/Sye"/>
</dbReference>
<dbReference type="InterPro" id="IPR014729">
    <property type="entry name" value="Rossmann-like_a/b/a_fold"/>
</dbReference>
<dbReference type="NCBIfam" id="NF004313">
    <property type="entry name" value="PRK05710.1-2"/>
    <property type="match status" value="1"/>
</dbReference>
<dbReference type="NCBIfam" id="NF004314">
    <property type="entry name" value="PRK05710.1-3"/>
    <property type="match status" value="1"/>
</dbReference>
<dbReference type="NCBIfam" id="NF004315">
    <property type="entry name" value="PRK05710.1-4"/>
    <property type="match status" value="1"/>
</dbReference>
<dbReference type="NCBIfam" id="TIGR03838">
    <property type="entry name" value="queuosine_YadB"/>
    <property type="match status" value="1"/>
</dbReference>
<dbReference type="PANTHER" id="PTHR43311">
    <property type="entry name" value="GLUTAMATE--TRNA LIGASE"/>
    <property type="match status" value="1"/>
</dbReference>
<dbReference type="PANTHER" id="PTHR43311:SF1">
    <property type="entry name" value="GLUTAMYL-Q TRNA(ASP) SYNTHETASE"/>
    <property type="match status" value="1"/>
</dbReference>
<dbReference type="Pfam" id="PF00749">
    <property type="entry name" value="tRNA-synt_1c"/>
    <property type="match status" value="1"/>
</dbReference>
<dbReference type="PRINTS" id="PR00987">
    <property type="entry name" value="TRNASYNTHGLU"/>
</dbReference>
<dbReference type="SUPFAM" id="SSF52374">
    <property type="entry name" value="Nucleotidylyl transferase"/>
    <property type="match status" value="1"/>
</dbReference>
<proteinExistence type="inferred from homology"/>
<name>GLUQ_CUPMC</name>
<gene>
    <name evidence="1" type="primary">gluQ</name>
    <name type="ordered locus">Rmet_2581</name>
</gene>
<sequence>MSQRYRGRFAPSPTGPLHLGSLVTALASWLDARAHGGDWLVRIEDIDYPRCVRDADNDILRTLDALGLHPDEPPVWQSRREGLYAEALRQLDAAGYLYPCGCTRKEIADSLVHVRERHQTLGYPGTCRNGLHGKLPRAWRVRVPDGPAATICFDDRWQGRQCQNLETELGDFVLRRADGLWAYQLAVVVDDAAQGITHIVRGADLLDSTPRQIHLEHLLGLPTPDYLHVPVVVNAVGEKLSKQSGAQALDASAPLDALRTAGTHLGIVNQETTVAAWLATATGQWLERLRAVQDLRGTPPSSAATGRLGA</sequence>
<feature type="chain" id="PRO_1000024365" description="Glutamyl-Q tRNA(Asp) synthetase">
    <location>
        <begin position="1"/>
        <end position="310"/>
    </location>
</feature>
<feature type="short sequence motif" description="'HIGH' region">
    <location>
        <begin position="11"/>
        <end position="21"/>
    </location>
</feature>
<feature type="short sequence motif" description="'KMSKS' region">
    <location>
        <begin position="239"/>
        <end position="243"/>
    </location>
</feature>
<feature type="binding site" evidence="1">
    <location>
        <begin position="8"/>
        <end position="12"/>
    </location>
    <ligand>
        <name>L-glutamate</name>
        <dbReference type="ChEBI" id="CHEBI:29985"/>
    </ligand>
</feature>
<feature type="binding site" evidence="1">
    <location>
        <position position="44"/>
    </location>
    <ligand>
        <name>L-glutamate</name>
        <dbReference type="ChEBI" id="CHEBI:29985"/>
    </ligand>
</feature>
<feature type="binding site" evidence="1">
    <location>
        <position position="100"/>
    </location>
    <ligand>
        <name>Zn(2+)</name>
        <dbReference type="ChEBI" id="CHEBI:29105"/>
    </ligand>
</feature>
<feature type="binding site" evidence="1">
    <location>
        <position position="102"/>
    </location>
    <ligand>
        <name>Zn(2+)</name>
        <dbReference type="ChEBI" id="CHEBI:29105"/>
    </ligand>
</feature>
<feature type="binding site" evidence="1">
    <location>
        <position position="123"/>
    </location>
    <ligand>
        <name>Zn(2+)</name>
        <dbReference type="ChEBI" id="CHEBI:29105"/>
    </ligand>
</feature>
<feature type="binding site" evidence="1">
    <location>
        <position position="127"/>
    </location>
    <ligand>
        <name>Zn(2+)</name>
        <dbReference type="ChEBI" id="CHEBI:29105"/>
    </ligand>
</feature>
<feature type="binding site" evidence="1">
    <location>
        <position position="183"/>
    </location>
    <ligand>
        <name>L-glutamate</name>
        <dbReference type="ChEBI" id="CHEBI:29985"/>
    </ligand>
</feature>
<feature type="binding site" evidence="1">
    <location>
        <position position="201"/>
    </location>
    <ligand>
        <name>L-glutamate</name>
        <dbReference type="ChEBI" id="CHEBI:29985"/>
    </ligand>
</feature>
<feature type="binding site" evidence="1">
    <location>
        <position position="242"/>
    </location>
    <ligand>
        <name>ATP</name>
        <dbReference type="ChEBI" id="CHEBI:30616"/>
    </ligand>
</feature>
<accession>Q1LK68</accession>
<comment type="function">
    <text evidence="1">Catalyzes the tRNA-independent activation of glutamate in presence of ATP and the subsequent transfer of glutamate onto a tRNA(Asp). Glutamate is transferred on the 2-amino-5-(4,5-dihydroxy-2-cyclopenten-1-yl) moiety of the queuosine in the wobble position of the QUC anticodon.</text>
</comment>
<comment type="cofactor">
    <cofactor evidence="1">
        <name>Zn(2+)</name>
        <dbReference type="ChEBI" id="CHEBI:29105"/>
    </cofactor>
    <text evidence="1">Binds 1 zinc ion per subunit.</text>
</comment>
<comment type="similarity">
    <text evidence="1">Belongs to the class-I aminoacyl-tRNA synthetase family. GluQ subfamily.</text>
</comment>
<reference key="1">
    <citation type="journal article" date="2010" name="PLoS ONE">
        <title>The complete genome sequence of Cupriavidus metallidurans strain CH34, a master survivalist in harsh and anthropogenic environments.</title>
        <authorList>
            <person name="Janssen P.J."/>
            <person name="Van Houdt R."/>
            <person name="Moors H."/>
            <person name="Monsieurs P."/>
            <person name="Morin N."/>
            <person name="Michaux A."/>
            <person name="Benotmane M.A."/>
            <person name="Leys N."/>
            <person name="Vallaeys T."/>
            <person name="Lapidus A."/>
            <person name="Monchy S."/>
            <person name="Medigue C."/>
            <person name="Taghavi S."/>
            <person name="McCorkle S."/>
            <person name="Dunn J."/>
            <person name="van der Lelie D."/>
            <person name="Mergeay M."/>
        </authorList>
    </citation>
    <scope>NUCLEOTIDE SEQUENCE [LARGE SCALE GENOMIC DNA]</scope>
    <source>
        <strain>ATCC 43123 / DSM 2839 / NBRC 102507 / CH34</strain>
    </source>
</reference>